<feature type="chain" id="PRO_0000416196" description="7-carboxy-7-deazaguanine synthase">
    <location>
        <begin position="1"/>
        <end position="182"/>
    </location>
</feature>
<feature type="domain" description="Radical SAM core" evidence="2">
    <location>
        <begin position="18"/>
        <end position="182"/>
    </location>
</feature>
<feature type="binding site" evidence="1">
    <location>
        <begin position="12"/>
        <end position="14"/>
    </location>
    <ligand>
        <name>substrate</name>
    </ligand>
</feature>
<feature type="binding site" evidence="1">
    <location>
        <position position="27"/>
    </location>
    <ligand>
        <name>substrate</name>
    </ligand>
</feature>
<feature type="binding site" evidence="1">
    <location>
        <position position="31"/>
    </location>
    <ligand>
        <name>[4Fe-4S] cluster</name>
        <dbReference type="ChEBI" id="CHEBI:49883"/>
        <note>4Fe-4S-S-AdoMet</note>
    </ligand>
</feature>
<feature type="binding site" evidence="1">
    <location>
        <position position="35"/>
    </location>
    <ligand>
        <name>[4Fe-4S] cluster</name>
        <dbReference type="ChEBI" id="CHEBI:49883"/>
        <note>4Fe-4S-S-AdoMet</note>
    </ligand>
</feature>
<feature type="binding site" evidence="1">
    <location>
        <position position="38"/>
    </location>
    <ligand>
        <name>[4Fe-4S] cluster</name>
        <dbReference type="ChEBI" id="CHEBI:49883"/>
        <note>4Fe-4S-S-AdoMet</note>
    </ligand>
</feature>
<feature type="binding site" evidence="1">
    <location>
        <position position="40"/>
    </location>
    <ligand>
        <name>Mg(2+)</name>
        <dbReference type="ChEBI" id="CHEBI:18420"/>
    </ligand>
</feature>
<feature type="binding site" evidence="1">
    <location>
        <position position="68"/>
    </location>
    <ligand>
        <name>substrate</name>
    </ligand>
</feature>
<feature type="binding site" evidence="1">
    <location>
        <position position="70"/>
    </location>
    <ligand>
        <name>S-adenosyl-L-methionine</name>
        <dbReference type="ChEBI" id="CHEBI:59789"/>
    </ligand>
</feature>
<feature type="binding site" evidence="1">
    <location>
        <begin position="111"/>
        <end position="113"/>
    </location>
    <ligand>
        <name>S-adenosyl-L-methionine</name>
        <dbReference type="ChEBI" id="CHEBI:59789"/>
    </ligand>
</feature>
<comment type="function">
    <text evidence="1">Catalyzes the complex heterocyclic radical-mediated conversion of 6-carboxy-5,6,7,8-tetrahydropterin (CPH4) to 7-carboxy-7-deazaguanine (CDG), a step common to the biosynthetic pathways of all 7-deazapurine-containing compounds.</text>
</comment>
<comment type="catalytic activity">
    <reaction evidence="1">
        <text>6-carboxy-5,6,7,8-tetrahydropterin + H(+) = 7-carboxy-7-deazaguanine + NH4(+)</text>
        <dbReference type="Rhea" id="RHEA:27974"/>
        <dbReference type="ChEBI" id="CHEBI:15378"/>
        <dbReference type="ChEBI" id="CHEBI:28938"/>
        <dbReference type="ChEBI" id="CHEBI:61032"/>
        <dbReference type="ChEBI" id="CHEBI:61036"/>
        <dbReference type="EC" id="4.3.99.3"/>
    </reaction>
</comment>
<comment type="cofactor">
    <cofactor evidence="1">
        <name>[4Fe-4S] cluster</name>
        <dbReference type="ChEBI" id="CHEBI:49883"/>
    </cofactor>
    <text evidence="1">Binds 1 [4Fe-4S] cluster. The cluster is coordinated with 3 cysteines and an exchangeable S-adenosyl-L-methionine.</text>
</comment>
<comment type="cofactor">
    <cofactor evidence="1">
        <name>S-adenosyl-L-methionine</name>
        <dbReference type="ChEBI" id="CHEBI:59789"/>
    </cofactor>
    <text evidence="1">Binds 1 S-adenosyl-L-methionine per subunit.</text>
</comment>
<comment type="cofactor">
    <cofactor evidence="1">
        <name>Mg(2+)</name>
        <dbReference type="ChEBI" id="CHEBI:18420"/>
    </cofactor>
</comment>
<comment type="pathway">
    <text evidence="1">Purine metabolism; 7-cyano-7-deazaguanine biosynthesis.</text>
</comment>
<comment type="subunit">
    <text evidence="1">Homodimer.</text>
</comment>
<comment type="similarity">
    <text evidence="1">Belongs to the radical SAM superfamily. 7-carboxy-7-deazaguanine synthase family.</text>
</comment>
<proteinExistence type="inferred from homology"/>
<keyword id="KW-0004">4Fe-4S</keyword>
<keyword id="KW-0408">Iron</keyword>
<keyword id="KW-0411">Iron-sulfur</keyword>
<keyword id="KW-0456">Lyase</keyword>
<keyword id="KW-0460">Magnesium</keyword>
<keyword id="KW-0479">Metal-binding</keyword>
<keyword id="KW-0671">Queuosine biosynthesis</keyword>
<keyword id="KW-1185">Reference proteome</keyword>
<keyword id="KW-0949">S-adenosyl-L-methionine</keyword>
<reference key="1">
    <citation type="journal article" date="2003" name="Science">
        <title>A genomic view of the human-Bacteroides thetaiotaomicron symbiosis.</title>
        <authorList>
            <person name="Xu J."/>
            <person name="Bjursell M.K."/>
            <person name="Himrod J."/>
            <person name="Deng S."/>
            <person name="Carmichael L.K."/>
            <person name="Chiang H.C."/>
            <person name="Hooper L.V."/>
            <person name="Gordon J.I."/>
        </authorList>
    </citation>
    <scope>NUCLEOTIDE SEQUENCE [LARGE SCALE GENOMIC DNA]</scope>
    <source>
        <strain>ATCC 29148 / DSM 2079 / JCM 5827 / CCUG 10774 / NCTC 10582 / VPI-5482 / E50</strain>
    </source>
</reference>
<protein>
    <recommendedName>
        <fullName evidence="1">7-carboxy-7-deazaguanine synthase</fullName>
        <shortName evidence="1">CDG synthase</shortName>
        <ecNumber evidence="1">4.3.99.3</ecNumber>
    </recommendedName>
    <alternativeName>
        <fullName evidence="1">Queuosine biosynthesis protein QueE</fullName>
    </alternativeName>
</protein>
<accession>Q89ZC3</accession>
<gene>
    <name evidence="1" type="primary">queE</name>
    <name type="ordered locus">BT_4454</name>
</gene>
<organism>
    <name type="scientific">Bacteroides thetaiotaomicron (strain ATCC 29148 / DSM 2079 / JCM 5827 / CCUG 10774 / NCTC 10582 / VPI-5482 / E50)</name>
    <dbReference type="NCBI Taxonomy" id="226186"/>
    <lineage>
        <taxon>Bacteria</taxon>
        <taxon>Pseudomonadati</taxon>
        <taxon>Bacteroidota</taxon>
        <taxon>Bacteroidia</taxon>
        <taxon>Bacteroidales</taxon>
        <taxon>Bacteroidaceae</taxon>
        <taxon>Bacteroides</taxon>
    </lineage>
</organism>
<dbReference type="EC" id="4.3.99.3" evidence="1"/>
<dbReference type="EMBL" id="AE015928">
    <property type="protein sequence ID" value="AAO79559.1"/>
    <property type="molecule type" value="Genomic_DNA"/>
</dbReference>
<dbReference type="RefSeq" id="NP_813365.1">
    <property type="nucleotide sequence ID" value="NC_004663.1"/>
</dbReference>
<dbReference type="SMR" id="Q89ZC3"/>
<dbReference type="FunCoup" id="Q89ZC3">
    <property type="interactions" value="111"/>
</dbReference>
<dbReference type="STRING" id="226186.BT_4454"/>
<dbReference type="PaxDb" id="226186-BT_4454"/>
<dbReference type="EnsemblBacteria" id="AAO79559">
    <property type="protein sequence ID" value="AAO79559"/>
    <property type="gene ID" value="BT_4454"/>
</dbReference>
<dbReference type="KEGG" id="bth:BT_4454"/>
<dbReference type="PATRIC" id="fig|226186.12.peg.4534"/>
<dbReference type="eggNOG" id="COG0602">
    <property type="taxonomic scope" value="Bacteria"/>
</dbReference>
<dbReference type="HOGENOM" id="CLU_066739_0_1_10"/>
<dbReference type="InParanoid" id="Q89ZC3"/>
<dbReference type="OrthoDB" id="9792276at2"/>
<dbReference type="UniPathway" id="UPA00391"/>
<dbReference type="Proteomes" id="UP000001414">
    <property type="component" value="Chromosome"/>
</dbReference>
<dbReference type="GO" id="GO:0051539">
    <property type="term" value="F:4 iron, 4 sulfur cluster binding"/>
    <property type="evidence" value="ECO:0007669"/>
    <property type="project" value="UniProtKB-UniRule"/>
</dbReference>
<dbReference type="GO" id="GO:0016840">
    <property type="term" value="F:carbon-nitrogen lyase activity"/>
    <property type="evidence" value="ECO:0007669"/>
    <property type="project" value="UniProtKB-UniRule"/>
</dbReference>
<dbReference type="GO" id="GO:0000287">
    <property type="term" value="F:magnesium ion binding"/>
    <property type="evidence" value="ECO:0007669"/>
    <property type="project" value="UniProtKB-UniRule"/>
</dbReference>
<dbReference type="GO" id="GO:1904047">
    <property type="term" value="F:S-adenosyl-L-methionine binding"/>
    <property type="evidence" value="ECO:0007669"/>
    <property type="project" value="UniProtKB-UniRule"/>
</dbReference>
<dbReference type="GO" id="GO:0008616">
    <property type="term" value="P:queuosine biosynthetic process"/>
    <property type="evidence" value="ECO:0007669"/>
    <property type="project" value="UniProtKB-UniRule"/>
</dbReference>
<dbReference type="CDD" id="cd01335">
    <property type="entry name" value="Radical_SAM"/>
    <property type="match status" value="1"/>
</dbReference>
<dbReference type="Gene3D" id="3.20.20.70">
    <property type="entry name" value="Aldolase class I"/>
    <property type="match status" value="1"/>
</dbReference>
<dbReference type="HAMAP" id="MF_00917">
    <property type="entry name" value="QueE"/>
    <property type="match status" value="1"/>
</dbReference>
<dbReference type="InterPro" id="IPR024924">
    <property type="entry name" value="7-CO-7-deazaguanine_synth-like"/>
</dbReference>
<dbReference type="InterPro" id="IPR013785">
    <property type="entry name" value="Aldolase_TIM"/>
</dbReference>
<dbReference type="InterPro" id="IPR007197">
    <property type="entry name" value="rSAM"/>
</dbReference>
<dbReference type="PANTHER" id="PTHR42836">
    <property type="entry name" value="7-CARBOXY-7-DEAZAGUANINE SYNTHASE"/>
    <property type="match status" value="1"/>
</dbReference>
<dbReference type="PANTHER" id="PTHR42836:SF1">
    <property type="entry name" value="7-CARBOXY-7-DEAZAGUANINE SYNTHASE"/>
    <property type="match status" value="1"/>
</dbReference>
<dbReference type="Pfam" id="PF13353">
    <property type="entry name" value="Fer4_12"/>
    <property type="match status" value="1"/>
</dbReference>
<dbReference type="Pfam" id="PF04055">
    <property type="entry name" value="Radical_SAM"/>
    <property type="match status" value="1"/>
</dbReference>
<dbReference type="PIRSF" id="PIRSF000370">
    <property type="entry name" value="QueE"/>
    <property type="match status" value="1"/>
</dbReference>
<dbReference type="SFLD" id="SFLDS00029">
    <property type="entry name" value="Radical_SAM"/>
    <property type="match status" value="1"/>
</dbReference>
<dbReference type="SUPFAM" id="SSF102114">
    <property type="entry name" value="Radical SAM enzymes"/>
    <property type="match status" value="1"/>
</dbReference>
<dbReference type="PROSITE" id="PS51918">
    <property type="entry name" value="RADICAL_SAM"/>
    <property type="match status" value="1"/>
</dbReference>
<evidence type="ECO:0000255" key="1">
    <source>
        <dbReference type="HAMAP-Rule" id="MF_00917"/>
    </source>
</evidence>
<evidence type="ECO:0000255" key="2">
    <source>
        <dbReference type="PROSITE-ProRule" id="PRU01266"/>
    </source>
</evidence>
<name>QUEE_BACTN</name>
<sequence>MMRKINEIFYSLQGEGYHTGTPAVFIRFSGCNLKCSFCDTQHEAGTLMTDDEIIAEVSKYPAVTVILTGGEPSLWIDDALIDRLHEAGKYVCIETNGTRPLPESIDWVTCSPKQGVKLGITRMDEVKVVYEGQDISIYELLPAEHFFLQPCSCNNTALTVDCVMRHPKWRLSLQTHKLIDIR</sequence>